<proteinExistence type="inferred from homology"/>
<reference key="1">
    <citation type="journal article" date="2005" name="Science">
        <title>The genome of the African trypanosome Trypanosoma brucei.</title>
        <authorList>
            <person name="Berriman M."/>
            <person name="Ghedin E."/>
            <person name="Hertz-Fowler C."/>
            <person name="Blandin G."/>
            <person name="Renauld H."/>
            <person name="Bartholomeu D.C."/>
            <person name="Lennard N.J."/>
            <person name="Caler E."/>
            <person name="Hamlin N.E."/>
            <person name="Haas B."/>
            <person name="Bohme U."/>
            <person name="Hannick L."/>
            <person name="Aslett M.A."/>
            <person name="Shallom J."/>
            <person name="Marcello L."/>
            <person name="Hou L."/>
            <person name="Wickstead B."/>
            <person name="Alsmark U.C.M."/>
            <person name="Arrowsmith C."/>
            <person name="Atkin R.J."/>
            <person name="Barron A.J."/>
            <person name="Bringaud F."/>
            <person name="Brooks K."/>
            <person name="Carrington M."/>
            <person name="Cherevach I."/>
            <person name="Chillingworth T.J."/>
            <person name="Churcher C."/>
            <person name="Clark L.N."/>
            <person name="Corton C.H."/>
            <person name="Cronin A."/>
            <person name="Davies R.M."/>
            <person name="Doggett J."/>
            <person name="Djikeng A."/>
            <person name="Feldblyum T."/>
            <person name="Field M.C."/>
            <person name="Fraser A."/>
            <person name="Goodhead I."/>
            <person name="Hance Z."/>
            <person name="Harper D."/>
            <person name="Harris B.R."/>
            <person name="Hauser H."/>
            <person name="Hostetler J."/>
            <person name="Ivens A."/>
            <person name="Jagels K."/>
            <person name="Johnson D."/>
            <person name="Johnson J."/>
            <person name="Jones K."/>
            <person name="Kerhornou A.X."/>
            <person name="Koo H."/>
            <person name="Larke N."/>
            <person name="Landfear S."/>
            <person name="Larkin C."/>
            <person name="Leech V."/>
            <person name="Line A."/>
            <person name="Lord A."/>
            <person name="Macleod A."/>
            <person name="Mooney P.J."/>
            <person name="Moule S."/>
            <person name="Martin D.M."/>
            <person name="Morgan G.W."/>
            <person name="Mungall K."/>
            <person name="Norbertczak H."/>
            <person name="Ormond D."/>
            <person name="Pai G."/>
            <person name="Peacock C.S."/>
            <person name="Peterson J."/>
            <person name="Quail M.A."/>
            <person name="Rabbinowitsch E."/>
            <person name="Rajandream M.A."/>
            <person name="Reitter C."/>
            <person name="Salzberg S.L."/>
            <person name="Sanders M."/>
            <person name="Schobel S."/>
            <person name="Sharp S."/>
            <person name="Simmonds M."/>
            <person name="Simpson A.J."/>
            <person name="Tallon L."/>
            <person name="Turner C.M."/>
            <person name="Tait A."/>
            <person name="Tivey A.R."/>
            <person name="Van Aken S."/>
            <person name="Walker D."/>
            <person name="Wanless D."/>
            <person name="Wang S."/>
            <person name="White B."/>
            <person name="White O."/>
            <person name="Whitehead S."/>
            <person name="Woodward J."/>
            <person name="Wortman J."/>
            <person name="Adams M.D."/>
            <person name="Embley T.M."/>
            <person name="Gull K."/>
            <person name="Ullu E."/>
            <person name="Barry J.D."/>
            <person name="Fairlamb A.H."/>
            <person name="Opperdoes F."/>
            <person name="Barrell B.G."/>
            <person name="Donelson J.E."/>
            <person name="Hall N."/>
            <person name="Fraser C.M."/>
            <person name="Melville S.E."/>
            <person name="El-Sayed N.M.A."/>
        </authorList>
    </citation>
    <scope>NUCLEOTIDE SEQUENCE [LARGE SCALE GENOMIC DNA]</scope>
    <source>
        <strain evidence="5">927/4 GUTat10.1</strain>
    </source>
</reference>
<reference key="2">
    <citation type="journal article" date="2008" name="PLoS Pathog.">
        <title>Identification of a bacterial-like HslVU protease in the mitochondria of Trypanosoma brucei and its role in mitochondrial DNA replication.</title>
        <authorList>
            <person name="Li Z."/>
            <person name="Lindsay M.E."/>
            <person name="Motyka S.A."/>
            <person name="Englund P.T."/>
            <person name="Wang C.C."/>
        </authorList>
    </citation>
    <scope>FUNCTION</scope>
    <scope>SUBCELLULAR LOCATION</scope>
</reference>
<feature type="transit peptide" description="Mitochondrion" evidence="2">
    <location>
        <begin position="1"/>
        <end position="27"/>
    </location>
</feature>
<feature type="chain" id="PRO_0000423755" description="ATP-dependent protease ATPase subunit HslU1">
    <location>
        <begin position="28"/>
        <end position="475"/>
    </location>
</feature>
<feature type="binding site" evidence="1">
    <location>
        <position position="66"/>
    </location>
    <ligand>
        <name>ATP</name>
        <dbReference type="ChEBI" id="CHEBI:30616"/>
    </ligand>
</feature>
<feature type="binding site" evidence="1">
    <location>
        <begin position="108"/>
        <end position="113"/>
    </location>
    <ligand>
        <name>ATP</name>
        <dbReference type="ChEBI" id="CHEBI:30616"/>
    </ligand>
</feature>
<feature type="binding site" evidence="1">
    <location>
        <position position="286"/>
    </location>
    <ligand>
        <name>ATP</name>
        <dbReference type="ChEBI" id="CHEBI:30616"/>
    </ligand>
</feature>
<feature type="binding site" evidence="1">
    <location>
        <position position="353"/>
    </location>
    <ligand>
        <name>ATP</name>
        <dbReference type="ChEBI" id="CHEBI:30616"/>
    </ligand>
</feature>
<feature type="binding site" evidence="1">
    <location>
        <position position="425"/>
    </location>
    <ligand>
        <name>ATP</name>
        <dbReference type="ChEBI" id="CHEBI:30616"/>
    </ligand>
</feature>
<organism>
    <name type="scientific">Trypanosoma brucei brucei (strain 927/4 GUTat10.1)</name>
    <dbReference type="NCBI Taxonomy" id="185431"/>
    <lineage>
        <taxon>Eukaryota</taxon>
        <taxon>Discoba</taxon>
        <taxon>Euglenozoa</taxon>
        <taxon>Kinetoplastea</taxon>
        <taxon>Metakinetoplastina</taxon>
        <taxon>Trypanosomatida</taxon>
        <taxon>Trypanosomatidae</taxon>
        <taxon>Trypanosoma</taxon>
    </lineage>
</organism>
<dbReference type="EMBL" id="AC159443">
    <property type="protein sequence ID" value="AAX70437.1"/>
    <property type="molecule type" value="Genomic_DNA"/>
</dbReference>
<dbReference type="EMBL" id="CP000068">
    <property type="protein sequence ID" value="AAZ11267.1"/>
    <property type="molecule type" value="Genomic_DNA"/>
</dbReference>
<dbReference type="RefSeq" id="XP_844826.1">
    <property type="nucleotide sequence ID" value="XM_839733.1"/>
</dbReference>
<dbReference type="SMR" id="Q57VB1"/>
<dbReference type="STRING" id="185431.Q57VB1"/>
<dbReference type="PaxDb" id="5691-AAZ11267"/>
<dbReference type="GeneID" id="3657262"/>
<dbReference type="KEGG" id="tbr:Tb927.5.1520"/>
<dbReference type="VEuPathDB" id="TriTrypDB:Tb927.5.1520"/>
<dbReference type="eggNOG" id="KOG0745">
    <property type="taxonomic scope" value="Eukaryota"/>
</dbReference>
<dbReference type="InParanoid" id="Q57VB1"/>
<dbReference type="OMA" id="YGMIKTD"/>
<dbReference type="OrthoDB" id="1721884at2759"/>
<dbReference type="BRENDA" id="3.4.25.2">
    <property type="organism ID" value="6519"/>
</dbReference>
<dbReference type="Proteomes" id="UP000008524">
    <property type="component" value="Chromosome 5"/>
</dbReference>
<dbReference type="GO" id="GO:0005737">
    <property type="term" value="C:cytoplasm"/>
    <property type="evidence" value="ECO:0000314"/>
    <property type="project" value="GeneDB"/>
</dbReference>
<dbReference type="GO" id="GO:0009376">
    <property type="term" value="C:HslUV protease complex"/>
    <property type="evidence" value="ECO:0000314"/>
    <property type="project" value="GeneDB"/>
</dbReference>
<dbReference type="GO" id="GO:0020023">
    <property type="term" value="C:kinetoplast"/>
    <property type="evidence" value="ECO:0007669"/>
    <property type="project" value="UniProtKB-SubCell"/>
</dbReference>
<dbReference type="GO" id="GO:0042645">
    <property type="term" value="C:mitochondrial nucleoid"/>
    <property type="evidence" value="ECO:0000314"/>
    <property type="project" value="GeneDB"/>
</dbReference>
<dbReference type="GO" id="GO:0005524">
    <property type="term" value="F:ATP binding"/>
    <property type="evidence" value="ECO:0000318"/>
    <property type="project" value="GO_Central"/>
</dbReference>
<dbReference type="GO" id="GO:0016887">
    <property type="term" value="F:ATP hydrolysis activity"/>
    <property type="evidence" value="ECO:0000318"/>
    <property type="project" value="GO_Central"/>
</dbReference>
<dbReference type="GO" id="GO:0008233">
    <property type="term" value="F:peptidase activity"/>
    <property type="evidence" value="ECO:0007669"/>
    <property type="project" value="InterPro"/>
</dbReference>
<dbReference type="GO" id="GO:0006264">
    <property type="term" value="P:mitochondrial DNA replication"/>
    <property type="evidence" value="ECO:0000315"/>
    <property type="project" value="GeneDB"/>
</dbReference>
<dbReference type="GO" id="GO:0051603">
    <property type="term" value="P:proteolysis involved in protein catabolic process"/>
    <property type="evidence" value="ECO:0000318"/>
    <property type="project" value="GO_Central"/>
</dbReference>
<dbReference type="GO" id="GO:0070581">
    <property type="term" value="P:rolling circle DNA replication"/>
    <property type="evidence" value="ECO:0000314"/>
    <property type="project" value="GeneDB"/>
</dbReference>
<dbReference type="CDD" id="cd19498">
    <property type="entry name" value="RecA-like_HslU"/>
    <property type="match status" value="1"/>
</dbReference>
<dbReference type="FunFam" id="3.40.50.300:FF:000220">
    <property type="entry name" value="ATP-dependent protease ATPase subunit HslU"/>
    <property type="match status" value="1"/>
</dbReference>
<dbReference type="FunFam" id="3.40.50.300:FF:001919">
    <property type="entry name" value="ATP-dependent protease ATPase subunit HslU1, putative"/>
    <property type="match status" value="1"/>
</dbReference>
<dbReference type="Gene3D" id="1.10.8.60">
    <property type="match status" value="1"/>
</dbReference>
<dbReference type="Gene3D" id="3.40.50.300">
    <property type="entry name" value="P-loop containing nucleotide triphosphate hydrolases"/>
    <property type="match status" value="2"/>
</dbReference>
<dbReference type="InterPro" id="IPR003593">
    <property type="entry name" value="AAA+_ATPase"/>
</dbReference>
<dbReference type="InterPro" id="IPR050052">
    <property type="entry name" value="ATP-dep_Clp_protease_ClpX"/>
</dbReference>
<dbReference type="InterPro" id="IPR003959">
    <property type="entry name" value="ATPase_AAA_core"/>
</dbReference>
<dbReference type="InterPro" id="IPR019489">
    <property type="entry name" value="Clp_ATPase_C"/>
</dbReference>
<dbReference type="InterPro" id="IPR004491">
    <property type="entry name" value="HslU"/>
</dbReference>
<dbReference type="InterPro" id="IPR027417">
    <property type="entry name" value="P-loop_NTPase"/>
</dbReference>
<dbReference type="NCBIfam" id="TIGR00390">
    <property type="entry name" value="hslU"/>
    <property type="match status" value="1"/>
</dbReference>
<dbReference type="NCBIfam" id="NF003544">
    <property type="entry name" value="PRK05201.1"/>
    <property type="match status" value="1"/>
</dbReference>
<dbReference type="PANTHER" id="PTHR48102">
    <property type="entry name" value="ATP-DEPENDENT CLP PROTEASE ATP-BINDING SUBUNIT CLPX-LIKE, MITOCHONDRIAL-RELATED"/>
    <property type="match status" value="1"/>
</dbReference>
<dbReference type="PANTHER" id="PTHR48102:SF3">
    <property type="entry name" value="ATP-DEPENDENT PROTEASE ATPASE SUBUNIT HSLU"/>
    <property type="match status" value="1"/>
</dbReference>
<dbReference type="Pfam" id="PF00004">
    <property type="entry name" value="AAA"/>
    <property type="match status" value="1"/>
</dbReference>
<dbReference type="Pfam" id="PF07724">
    <property type="entry name" value="AAA_2"/>
    <property type="match status" value="1"/>
</dbReference>
<dbReference type="SMART" id="SM00382">
    <property type="entry name" value="AAA"/>
    <property type="match status" value="1"/>
</dbReference>
<dbReference type="SMART" id="SM01086">
    <property type="entry name" value="ClpB_D2-small"/>
    <property type="match status" value="1"/>
</dbReference>
<dbReference type="SUPFAM" id="SSF52540">
    <property type="entry name" value="P-loop containing nucleoside triphosphate hydrolases"/>
    <property type="match status" value="1"/>
</dbReference>
<protein>
    <recommendedName>
        <fullName>ATP-dependent protease ATPase subunit HslU1</fullName>
    </recommendedName>
    <alternativeName>
        <fullName>Mitochondrial proteasome-like protease HslVU ATPase subunit 1</fullName>
    </alternativeName>
</protein>
<name>HSLU1_TRYB2</name>
<evidence type="ECO:0000250" key="1"/>
<evidence type="ECO:0000255" key="2"/>
<evidence type="ECO:0000269" key="3">
    <source>
    </source>
</evidence>
<evidence type="ECO:0000305" key="4"/>
<evidence type="ECO:0000312" key="5">
    <source>
        <dbReference type="Proteomes" id="UP000008524"/>
    </source>
</evidence>
<gene>
    <name type="primary">HslU1</name>
    <name type="ORF">Tb927.5.1520</name>
</gene>
<comment type="function">
    <text evidence="1 3">ATPase subunit of a proteasome-like degradation complex; this subunit has chaperone activity. The binding of ATP and its subsequent hydrolysis by HslU are essential for unfolding of protein substrates subsequently hydrolyzed by HslV. HslU recognizes the N-terminal part of its protein substrates and unfolds these before they are guided to HslV for hydrolysis (By similarity). The HslVU protease complex functions in mitochondrial DNA replication by regulating DNA helicase PIF2 protein levels.</text>
</comment>
<comment type="subunit">
    <text evidence="1">A double ring-shaped homohexamer of HslV is capped on each side by a ring-shaped HslU homohexamer. The assembly of the HslU/HslV complex (HslVU) is dependent on binding of ATP (By similarity).</text>
</comment>
<comment type="subcellular location">
    <subcellularLocation>
        <location evidence="3">Mitochondrion matrix</location>
        <location evidence="3">Kinetoplast</location>
    </subcellularLocation>
    <text>Associated with kinetoplast DNA (kDNA).</text>
</comment>
<comment type="similarity">
    <text evidence="4">Belongs to the ClpX chaperone family. HslU subfamily.</text>
</comment>
<keyword id="KW-0067">ATP-binding</keyword>
<keyword id="KW-0143">Chaperone</keyword>
<keyword id="KW-0419">Kinetoplast</keyword>
<keyword id="KW-0496">Mitochondrion</keyword>
<keyword id="KW-0547">Nucleotide-binding</keyword>
<keyword id="KW-1185">Reference proteome</keyword>
<keyword id="KW-0809">Transit peptide</keyword>
<sequence>MMRRVTSSLPSALKLGRSLGPNVRFSGGAAAVEASPAIPPNSSSGKTLVRNMKPRELMQELDNYIIGQTEAKKAVAVALRNRWRRHQVDAAIREEISPKNILMIGPTGVGKTEIARRLAKLVDAPFIKVEATKFTEVGFHGRDVESIIEDLYKASLTQTKQNIMRRHEETARQKAENRILKALAGVSDGFREHLRSGALDDIEVIVELQEKKEKPKNSGTNEGVFISLEIPSSIGGQRPQTVKKVMKIKDAIPAVLQEELDKIVDTEDVSAEALRACEEDGIVVIDEIDKIVTASGGYKGHQASAEGVQQDLLPLVEGTTVSTKGNVQIKTDKILFICSGAFHSVKPSDMLAELQGRLPIRVELKPLTKEDFHRIITEPRYNLIKQHVMMMKTEGVDLVFTDDALWEIASIAAHINSTVQNIGARRLITITEKVVEEVSFDGPDRKGETFVIDAAYVRNSVESMMKKVDIKKFIL</sequence>
<accession>Q57VB1</accession>
<accession>D6XG90</accession>